<feature type="chain" id="PRO_0000064247" description="Glycylpeptide N-tetradecanoyltransferase">
    <location>
        <begin position="1"/>
        <end position="466"/>
    </location>
</feature>
<feature type="region of interest" description="Disordered" evidence="3">
    <location>
        <begin position="1"/>
        <end position="21"/>
    </location>
</feature>
<feature type="compositionally biased region" description="Polar residues" evidence="3">
    <location>
        <begin position="8"/>
        <end position="19"/>
    </location>
</feature>
<feature type="active site" description="Proton acceptor; via carboxylate" evidence="1">
    <location>
        <position position="466"/>
    </location>
</feature>
<feature type="binding site" evidence="2">
    <location>
        <begin position="51"/>
        <end position="54"/>
    </location>
    <ligand>
        <name>tetradecanoyl-CoA</name>
        <dbReference type="ChEBI" id="CHEBI:57385"/>
    </ligand>
</feature>
<feature type="binding site" evidence="2">
    <location>
        <begin position="185"/>
        <end position="187"/>
    </location>
    <ligand>
        <name>tetradecanoyl-CoA</name>
        <dbReference type="ChEBI" id="CHEBI:57385"/>
    </ligand>
</feature>
<feature type="binding site" evidence="2">
    <location>
        <begin position="193"/>
        <end position="197"/>
    </location>
    <ligand>
        <name>tetradecanoyl-CoA</name>
        <dbReference type="ChEBI" id="CHEBI:57385"/>
    </ligand>
</feature>
<feature type="modified residue" description="Phosphoserine" evidence="4">
    <location>
        <position position="17"/>
    </location>
</feature>
<dbReference type="EC" id="2.3.1.97"/>
<dbReference type="EMBL" id="CU329671">
    <property type="protein sequence ID" value="CAA17891.1"/>
    <property type="molecule type" value="Genomic_DNA"/>
</dbReference>
<dbReference type="PIR" id="T40150">
    <property type="entry name" value="T40150"/>
</dbReference>
<dbReference type="SMR" id="O43010"/>
<dbReference type="FunCoup" id="O43010">
    <property type="interactions" value="844"/>
</dbReference>
<dbReference type="STRING" id="284812.O43010"/>
<dbReference type="iPTMnet" id="O43010"/>
<dbReference type="PaxDb" id="4896-SPBC2G2.11.1"/>
<dbReference type="EnsemblFungi" id="SPBC2G2.11.1">
    <property type="protein sequence ID" value="SPBC2G2.11.1:pep"/>
    <property type="gene ID" value="SPBC2G2.11"/>
</dbReference>
<dbReference type="KEGG" id="spo:2540407"/>
<dbReference type="PomBase" id="SPBC2G2.11"/>
<dbReference type="VEuPathDB" id="FungiDB:SPBC2G2.11"/>
<dbReference type="eggNOG" id="KOG2779">
    <property type="taxonomic scope" value="Eukaryota"/>
</dbReference>
<dbReference type="HOGENOM" id="CLU_022882_1_0_1"/>
<dbReference type="InParanoid" id="O43010"/>
<dbReference type="OMA" id="GWKRDWH"/>
<dbReference type="PhylomeDB" id="O43010"/>
<dbReference type="Reactome" id="R-SPO-2514859">
    <property type="pathway name" value="Inactivation, recovery and regulation of the phototransduction cascade"/>
</dbReference>
<dbReference type="PRO" id="PR:O43010"/>
<dbReference type="Proteomes" id="UP000002485">
    <property type="component" value="Chromosome II"/>
</dbReference>
<dbReference type="GO" id="GO:0005829">
    <property type="term" value="C:cytosol"/>
    <property type="evidence" value="ECO:0007005"/>
    <property type="project" value="PomBase"/>
</dbReference>
<dbReference type="GO" id="GO:0004379">
    <property type="term" value="F:glycylpeptide N-tetradecanoyltransferase activity"/>
    <property type="evidence" value="ECO:0000318"/>
    <property type="project" value="GO_Central"/>
</dbReference>
<dbReference type="GO" id="GO:0001676">
    <property type="term" value="P:long-chain fatty acid metabolic process"/>
    <property type="evidence" value="ECO:0000303"/>
    <property type="project" value="PomBase"/>
</dbReference>
<dbReference type="GO" id="GO:0072657">
    <property type="term" value="P:protein localization to membrane"/>
    <property type="evidence" value="ECO:0000318"/>
    <property type="project" value="GO_Central"/>
</dbReference>
<dbReference type="FunFam" id="3.40.630.170:FF:000003">
    <property type="entry name" value="Glycylpeptide N-tetradecanoyltransferase"/>
    <property type="match status" value="1"/>
</dbReference>
<dbReference type="FunFam" id="3.40.630.30:FF:000042">
    <property type="entry name" value="Glycylpeptide N-tetradecanoyltransferase"/>
    <property type="match status" value="1"/>
</dbReference>
<dbReference type="FunFam" id="3.40.630.30:FF:000056">
    <property type="entry name" value="Glycylpeptide N-tetradecanoyltransferase"/>
    <property type="match status" value="1"/>
</dbReference>
<dbReference type="Gene3D" id="3.40.630.30">
    <property type="match status" value="2"/>
</dbReference>
<dbReference type="InterPro" id="IPR016181">
    <property type="entry name" value="Acyl_CoA_acyltransferase"/>
</dbReference>
<dbReference type="InterPro" id="IPR000903">
    <property type="entry name" value="NMT"/>
</dbReference>
<dbReference type="InterPro" id="IPR022677">
    <property type="entry name" value="NMT_C"/>
</dbReference>
<dbReference type="InterPro" id="IPR022678">
    <property type="entry name" value="NMT_CS"/>
</dbReference>
<dbReference type="InterPro" id="IPR022676">
    <property type="entry name" value="NMT_N"/>
</dbReference>
<dbReference type="PANTHER" id="PTHR11377:SF5">
    <property type="entry name" value="GLYCYLPEPTIDE N-TETRADECANOYLTRANSFERASE"/>
    <property type="match status" value="1"/>
</dbReference>
<dbReference type="PANTHER" id="PTHR11377">
    <property type="entry name" value="N-MYRISTOYL TRANSFERASE"/>
    <property type="match status" value="1"/>
</dbReference>
<dbReference type="Pfam" id="PF01233">
    <property type="entry name" value="NMT"/>
    <property type="match status" value="1"/>
</dbReference>
<dbReference type="Pfam" id="PF02799">
    <property type="entry name" value="NMT_C"/>
    <property type="match status" value="1"/>
</dbReference>
<dbReference type="PIRSF" id="PIRSF015892">
    <property type="entry name" value="N-myristl_transf"/>
    <property type="match status" value="1"/>
</dbReference>
<dbReference type="SUPFAM" id="SSF55729">
    <property type="entry name" value="Acyl-CoA N-acyltransferases (Nat)"/>
    <property type="match status" value="2"/>
</dbReference>
<dbReference type="PROSITE" id="PS00975">
    <property type="entry name" value="NMT_1"/>
    <property type="match status" value="1"/>
</dbReference>
<dbReference type="PROSITE" id="PS00976">
    <property type="entry name" value="NMT_2"/>
    <property type="match status" value="1"/>
</dbReference>
<sequence>MDNENNKNTKNSQQDSSFSEGGIRELLDRLALRSLIEKEEAAAPPKTYEDFKFWKTQPVPKFDDECTQEGPIDPNTDINQVPREPYRLLKEFEWATIDVTNDNELSEVHELLTENYVEDATAMLRFAYISEFLRWALMPPGYVKEWHVGVRVKSSRKLVAFISAVPLSIRVRDKIIKKCAEVNFLCIHKKLRSKRLTPLLIKEVTRRCHLENVWQAVYTAGVLLPSPVSLSRYMHRSLNWKKLYDIGFAPFPLGSTEKKETAKYHLPPNTQTPGLRPMELKDVPAVQSLLSQYMERFELAHLFSEEEVRHWFLYTDKVSSGPVVWSYVVENPESKKITDFFSFYSLPSTVIGNPKYKDIQAAYLYYYASDSCPKDLSSESQLAFVERCKLIVNDALILAKKFHFDVFNAVTVLDNNLFLKDLKFGEGDGFLNYYIYNYNCPKIPGGIDASKSVDYSRPSGMGFVMI</sequence>
<organism>
    <name type="scientific">Schizosaccharomyces pombe (strain 972 / ATCC 24843)</name>
    <name type="common">Fission yeast</name>
    <dbReference type="NCBI Taxonomy" id="284812"/>
    <lineage>
        <taxon>Eukaryota</taxon>
        <taxon>Fungi</taxon>
        <taxon>Dikarya</taxon>
        <taxon>Ascomycota</taxon>
        <taxon>Taphrinomycotina</taxon>
        <taxon>Schizosaccharomycetes</taxon>
        <taxon>Schizosaccharomycetales</taxon>
        <taxon>Schizosaccharomycetaceae</taxon>
        <taxon>Schizosaccharomyces</taxon>
    </lineage>
</organism>
<comment type="function">
    <text evidence="1">Adds a myristoyl group to the N-terminal glycine residue of certain cellular proteins.</text>
</comment>
<comment type="catalytic activity">
    <reaction>
        <text>N-terminal glycyl-[protein] + tetradecanoyl-CoA = N-tetradecanoylglycyl-[protein] + CoA + H(+)</text>
        <dbReference type="Rhea" id="RHEA:15521"/>
        <dbReference type="Rhea" id="RHEA-COMP:12666"/>
        <dbReference type="Rhea" id="RHEA-COMP:12667"/>
        <dbReference type="ChEBI" id="CHEBI:15378"/>
        <dbReference type="ChEBI" id="CHEBI:57287"/>
        <dbReference type="ChEBI" id="CHEBI:57385"/>
        <dbReference type="ChEBI" id="CHEBI:64723"/>
        <dbReference type="ChEBI" id="CHEBI:133050"/>
        <dbReference type="EC" id="2.3.1.97"/>
    </reaction>
</comment>
<comment type="subunit">
    <text evidence="1">Monomer.</text>
</comment>
<comment type="subcellular location">
    <subcellularLocation>
        <location evidence="1">Cytoplasm</location>
    </subcellularLocation>
</comment>
<comment type="similarity">
    <text evidence="5">Belongs to the NMT family.</text>
</comment>
<proteinExistence type="evidence at protein level"/>
<accession>O43010</accession>
<gene>
    <name type="primary">nmt1</name>
    <name type="ORF">SPBC2G2.11</name>
</gene>
<protein>
    <recommendedName>
        <fullName>Glycylpeptide N-tetradecanoyltransferase</fullName>
        <ecNumber>2.3.1.97</ecNumber>
    </recommendedName>
    <alternativeName>
        <fullName>Myristoyl-CoA:protein N-myristoyltransferase</fullName>
        <shortName>NMT</shortName>
    </alternativeName>
    <alternativeName>
        <fullName>Peptide N-myristoyltransferase</fullName>
    </alternativeName>
</protein>
<name>NMT_SCHPO</name>
<keyword id="KW-0012">Acyltransferase</keyword>
<keyword id="KW-0963">Cytoplasm</keyword>
<keyword id="KW-0597">Phosphoprotein</keyword>
<keyword id="KW-1185">Reference proteome</keyword>
<keyword id="KW-0808">Transferase</keyword>
<evidence type="ECO:0000250" key="1"/>
<evidence type="ECO:0000250" key="2">
    <source>
        <dbReference type="UniProtKB" id="P14743"/>
    </source>
</evidence>
<evidence type="ECO:0000256" key="3">
    <source>
        <dbReference type="SAM" id="MobiDB-lite"/>
    </source>
</evidence>
<evidence type="ECO:0000269" key="4">
    <source>
    </source>
</evidence>
<evidence type="ECO:0000305" key="5"/>
<reference key="1">
    <citation type="journal article" date="2002" name="Nature">
        <title>The genome sequence of Schizosaccharomyces pombe.</title>
        <authorList>
            <person name="Wood V."/>
            <person name="Gwilliam R."/>
            <person name="Rajandream M.A."/>
            <person name="Lyne M.H."/>
            <person name="Lyne R."/>
            <person name="Stewart A."/>
            <person name="Sgouros J.G."/>
            <person name="Peat N."/>
            <person name="Hayles J."/>
            <person name="Baker S.G."/>
            <person name="Basham D."/>
            <person name="Bowman S."/>
            <person name="Brooks K."/>
            <person name="Brown D."/>
            <person name="Brown S."/>
            <person name="Chillingworth T."/>
            <person name="Churcher C.M."/>
            <person name="Collins M."/>
            <person name="Connor R."/>
            <person name="Cronin A."/>
            <person name="Davis P."/>
            <person name="Feltwell T."/>
            <person name="Fraser A."/>
            <person name="Gentles S."/>
            <person name="Goble A."/>
            <person name="Hamlin N."/>
            <person name="Harris D.E."/>
            <person name="Hidalgo J."/>
            <person name="Hodgson G."/>
            <person name="Holroyd S."/>
            <person name="Hornsby T."/>
            <person name="Howarth S."/>
            <person name="Huckle E.J."/>
            <person name="Hunt S."/>
            <person name="Jagels K."/>
            <person name="James K.D."/>
            <person name="Jones L."/>
            <person name="Jones M."/>
            <person name="Leather S."/>
            <person name="McDonald S."/>
            <person name="McLean J."/>
            <person name="Mooney P."/>
            <person name="Moule S."/>
            <person name="Mungall K.L."/>
            <person name="Murphy L.D."/>
            <person name="Niblett D."/>
            <person name="Odell C."/>
            <person name="Oliver K."/>
            <person name="O'Neil S."/>
            <person name="Pearson D."/>
            <person name="Quail M.A."/>
            <person name="Rabbinowitsch E."/>
            <person name="Rutherford K.M."/>
            <person name="Rutter S."/>
            <person name="Saunders D."/>
            <person name="Seeger K."/>
            <person name="Sharp S."/>
            <person name="Skelton J."/>
            <person name="Simmonds M.N."/>
            <person name="Squares R."/>
            <person name="Squares S."/>
            <person name="Stevens K."/>
            <person name="Taylor K."/>
            <person name="Taylor R.G."/>
            <person name="Tivey A."/>
            <person name="Walsh S.V."/>
            <person name="Warren T."/>
            <person name="Whitehead S."/>
            <person name="Woodward J.R."/>
            <person name="Volckaert G."/>
            <person name="Aert R."/>
            <person name="Robben J."/>
            <person name="Grymonprez B."/>
            <person name="Weltjens I."/>
            <person name="Vanstreels E."/>
            <person name="Rieger M."/>
            <person name="Schaefer M."/>
            <person name="Mueller-Auer S."/>
            <person name="Gabel C."/>
            <person name="Fuchs M."/>
            <person name="Duesterhoeft A."/>
            <person name="Fritzc C."/>
            <person name="Holzer E."/>
            <person name="Moestl D."/>
            <person name="Hilbert H."/>
            <person name="Borzym K."/>
            <person name="Langer I."/>
            <person name="Beck A."/>
            <person name="Lehrach H."/>
            <person name="Reinhardt R."/>
            <person name="Pohl T.M."/>
            <person name="Eger P."/>
            <person name="Zimmermann W."/>
            <person name="Wedler H."/>
            <person name="Wambutt R."/>
            <person name="Purnelle B."/>
            <person name="Goffeau A."/>
            <person name="Cadieu E."/>
            <person name="Dreano S."/>
            <person name="Gloux S."/>
            <person name="Lelaure V."/>
            <person name="Mottier S."/>
            <person name="Galibert F."/>
            <person name="Aves S.J."/>
            <person name="Xiang Z."/>
            <person name="Hunt C."/>
            <person name="Moore K."/>
            <person name="Hurst S.M."/>
            <person name="Lucas M."/>
            <person name="Rochet M."/>
            <person name="Gaillardin C."/>
            <person name="Tallada V.A."/>
            <person name="Garzon A."/>
            <person name="Thode G."/>
            <person name="Daga R.R."/>
            <person name="Cruzado L."/>
            <person name="Jimenez J."/>
            <person name="Sanchez M."/>
            <person name="del Rey F."/>
            <person name="Benito J."/>
            <person name="Dominguez A."/>
            <person name="Revuelta J.L."/>
            <person name="Moreno S."/>
            <person name="Armstrong J."/>
            <person name="Forsburg S.L."/>
            <person name="Cerutti L."/>
            <person name="Lowe T."/>
            <person name="McCombie W.R."/>
            <person name="Paulsen I."/>
            <person name="Potashkin J."/>
            <person name="Shpakovski G.V."/>
            <person name="Ussery D."/>
            <person name="Barrell B.G."/>
            <person name="Nurse P."/>
        </authorList>
    </citation>
    <scope>NUCLEOTIDE SEQUENCE [LARGE SCALE GENOMIC DNA]</scope>
    <source>
        <strain>972 / ATCC 24843</strain>
    </source>
</reference>
<reference key="2">
    <citation type="journal article" date="2008" name="J. Proteome Res.">
        <title>Phosphoproteome analysis of fission yeast.</title>
        <authorList>
            <person name="Wilson-Grady J.T."/>
            <person name="Villen J."/>
            <person name="Gygi S.P."/>
        </authorList>
    </citation>
    <scope>PHOSPHORYLATION [LARGE SCALE ANALYSIS] AT SER-17</scope>
    <scope>IDENTIFICATION BY MASS SPECTROMETRY</scope>
</reference>